<accession>B8FRS2</accession>
<organism>
    <name type="scientific">Desulfitobacterium hafniense (strain DSM 10664 / DCB-2)</name>
    <dbReference type="NCBI Taxonomy" id="272564"/>
    <lineage>
        <taxon>Bacteria</taxon>
        <taxon>Bacillati</taxon>
        <taxon>Bacillota</taxon>
        <taxon>Clostridia</taxon>
        <taxon>Eubacteriales</taxon>
        <taxon>Desulfitobacteriaceae</taxon>
        <taxon>Desulfitobacterium</taxon>
    </lineage>
</organism>
<name>ACP_DESHD</name>
<proteinExistence type="inferred from homology"/>
<gene>
    <name evidence="1" type="primary">acpP</name>
    <name type="ordered locus">Dhaf_3816</name>
</gene>
<protein>
    <recommendedName>
        <fullName evidence="1">Acyl carrier protein</fullName>
        <shortName evidence="1">ACP</shortName>
    </recommendedName>
</protein>
<evidence type="ECO:0000255" key="1">
    <source>
        <dbReference type="HAMAP-Rule" id="MF_01217"/>
    </source>
</evidence>
<evidence type="ECO:0000255" key="2">
    <source>
        <dbReference type="PROSITE-ProRule" id="PRU00258"/>
    </source>
</evidence>
<keyword id="KW-0963">Cytoplasm</keyword>
<keyword id="KW-0275">Fatty acid biosynthesis</keyword>
<keyword id="KW-0276">Fatty acid metabolism</keyword>
<keyword id="KW-0444">Lipid biosynthesis</keyword>
<keyword id="KW-0443">Lipid metabolism</keyword>
<keyword id="KW-0596">Phosphopantetheine</keyword>
<keyword id="KW-0597">Phosphoprotein</keyword>
<sequence>MSVFDKVKSIVVDQLGVEEDEITLETTFADLNADSLDIVELIMALEEEFDLDIPDEDAEKIRNVGDAVNYIKENQ</sequence>
<feature type="chain" id="PRO_1000164782" description="Acyl carrier protein">
    <location>
        <begin position="1"/>
        <end position="75"/>
    </location>
</feature>
<feature type="domain" description="Carrier" evidence="2">
    <location>
        <begin position="1"/>
        <end position="75"/>
    </location>
</feature>
<feature type="modified residue" description="O-(pantetheine 4'-phosphoryl)serine" evidence="2">
    <location>
        <position position="35"/>
    </location>
</feature>
<reference key="1">
    <citation type="journal article" date="2012" name="BMC Microbiol.">
        <title>Genome sequence of Desulfitobacterium hafniense DCB-2, a Gram-positive anaerobe capable of dehalogenation and metal reduction.</title>
        <authorList>
            <person name="Kim S.H."/>
            <person name="Harzman C."/>
            <person name="Davis J.K."/>
            <person name="Hutcheson R."/>
            <person name="Broderick J.B."/>
            <person name="Marsh T.L."/>
            <person name="Tiedje J.M."/>
        </authorList>
    </citation>
    <scope>NUCLEOTIDE SEQUENCE [LARGE SCALE GENOMIC DNA]</scope>
    <source>
        <strain>DSM 10664 / DCB-2</strain>
    </source>
</reference>
<dbReference type="EMBL" id="CP001336">
    <property type="protein sequence ID" value="ACL21832.1"/>
    <property type="molecule type" value="Genomic_DNA"/>
</dbReference>
<dbReference type="RefSeq" id="WP_005813415.1">
    <property type="nucleotide sequence ID" value="NC_011830.1"/>
</dbReference>
<dbReference type="SMR" id="B8FRS2"/>
<dbReference type="KEGG" id="dhd:Dhaf_3816"/>
<dbReference type="HOGENOM" id="CLU_108696_5_1_9"/>
<dbReference type="UniPathway" id="UPA00094"/>
<dbReference type="Proteomes" id="UP000007726">
    <property type="component" value="Chromosome"/>
</dbReference>
<dbReference type="GO" id="GO:0005829">
    <property type="term" value="C:cytosol"/>
    <property type="evidence" value="ECO:0007669"/>
    <property type="project" value="TreeGrafter"/>
</dbReference>
<dbReference type="GO" id="GO:0016020">
    <property type="term" value="C:membrane"/>
    <property type="evidence" value="ECO:0007669"/>
    <property type="project" value="GOC"/>
</dbReference>
<dbReference type="GO" id="GO:0000035">
    <property type="term" value="F:acyl binding"/>
    <property type="evidence" value="ECO:0007669"/>
    <property type="project" value="TreeGrafter"/>
</dbReference>
<dbReference type="GO" id="GO:0000036">
    <property type="term" value="F:acyl carrier activity"/>
    <property type="evidence" value="ECO:0007669"/>
    <property type="project" value="UniProtKB-UniRule"/>
</dbReference>
<dbReference type="GO" id="GO:0031177">
    <property type="term" value="F:phosphopantetheine binding"/>
    <property type="evidence" value="ECO:0007669"/>
    <property type="project" value="InterPro"/>
</dbReference>
<dbReference type="GO" id="GO:0009245">
    <property type="term" value="P:lipid A biosynthetic process"/>
    <property type="evidence" value="ECO:0007669"/>
    <property type="project" value="TreeGrafter"/>
</dbReference>
<dbReference type="Gene3D" id="1.10.1200.10">
    <property type="entry name" value="ACP-like"/>
    <property type="match status" value="1"/>
</dbReference>
<dbReference type="HAMAP" id="MF_01217">
    <property type="entry name" value="Acyl_carrier"/>
    <property type="match status" value="1"/>
</dbReference>
<dbReference type="InterPro" id="IPR003231">
    <property type="entry name" value="ACP"/>
</dbReference>
<dbReference type="InterPro" id="IPR036736">
    <property type="entry name" value="ACP-like_sf"/>
</dbReference>
<dbReference type="InterPro" id="IPR020806">
    <property type="entry name" value="PKS_PP-bd"/>
</dbReference>
<dbReference type="InterPro" id="IPR009081">
    <property type="entry name" value="PP-bd_ACP"/>
</dbReference>
<dbReference type="InterPro" id="IPR006162">
    <property type="entry name" value="Ppantetheine_attach_site"/>
</dbReference>
<dbReference type="NCBIfam" id="TIGR00517">
    <property type="entry name" value="acyl_carrier"/>
    <property type="match status" value="1"/>
</dbReference>
<dbReference type="NCBIfam" id="NF002148">
    <property type="entry name" value="PRK00982.1-2"/>
    <property type="match status" value="1"/>
</dbReference>
<dbReference type="NCBIfam" id="NF002150">
    <property type="entry name" value="PRK00982.1-4"/>
    <property type="match status" value="1"/>
</dbReference>
<dbReference type="NCBIfam" id="NF002151">
    <property type="entry name" value="PRK00982.1-5"/>
    <property type="match status" value="1"/>
</dbReference>
<dbReference type="PANTHER" id="PTHR20863">
    <property type="entry name" value="ACYL CARRIER PROTEIN"/>
    <property type="match status" value="1"/>
</dbReference>
<dbReference type="PANTHER" id="PTHR20863:SF76">
    <property type="entry name" value="CARRIER DOMAIN-CONTAINING PROTEIN"/>
    <property type="match status" value="1"/>
</dbReference>
<dbReference type="Pfam" id="PF00550">
    <property type="entry name" value="PP-binding"/>
    <property type="match status" value="1"/>
</dbReference>
<dbReference type="SMART" id="SM00823">
    <property type="entry name" value="PKS_PP"/>
    <property type="match status" value="1"/>
</dbReference>
<dbReference type="SUPFAM" id="SSF47336">
    <property type="entry name" value="ACP-like"/>
    <property type="match status" value="1"/>
</dbReference>
<dbReference type="PROSITE" id="PS50075">
    <property type="entry name" value="CARRIER"/>
    <property type="match status" value="1"/>
</dbReference>
<dbReference type="PROSITE" id="PS00012">
    <property type="entry name" value="PHOSPHOPANTETHEINE"/>
    <property type="match status" value="1"/>
</dbReference>
<comment type="function">
    <text evidence="1">Carrier of the growing fatty acid chain in fatty acid biosynthesis.</text>
</comment>
<comment type="pathway">
    <text evidence="1">Lipid metabolism; fatty acid biosynthesis.</text>
</comment>
<comment type="subcellular location">
    <subcellularLocation>
        <location evidence="1">Cytoplasm</location>
    </subcellularLocation>
</comment>
<comment type="PTM">
    <text evidence="1">4'-phosphopantetheine is transferred from CoA to a specific serine of apo-ACP by AcpS. This modification is essential for activity because fatty acids are bound in thioester linkage to the sulfhydryl of the prosthetic group.</text>
</comment>
<comment type="similarity">
    <text evidence="1">Belongs to the acyl carrier protein (ACP) family.</text>
</comment>